<proteinExistence type="inferred from homology"/>
<protein>
    <recommendedName>
        <fullName evidence="1">Histidinol-phosphate aminotransferase</fullName>
        <ecNumber evidence="1">2.6.1.9</ecNumber>
    </recommendedName>
    <alternativeName>
        <fullName evidence="1">Imidazole acetol-phosphate transaminase</fullName>
    </alternativeName>
</protein>
<name>HIS8_BACVZ</name>
<sequence length="360" mass="40347">MQIKEQLRQLKPYQPGKPIEEVKMEYGLEKVVKLASNENPFGCSQAAKDALHQEIEQLALYPDGYSAALRTRLSEHLQVSESSIIFGNGSDELVQIICRSLLNDQANTITAAPTFPQYRHNAVIEGAEVREVPLRSDGAHDLDRMLEAIDGETKIIWVCNPNNPTGTYTSEQELIAFLNRVPEHILVVLDEAYYEYVTAEDYPESIPLLKQYPNVMILRTFSKAYGLAALRVGYGIADEALIRQIEPAREPFNTSRIGQASALAALDDQTFIQECVEKNKAGLKQYYDFAETHGLTCYPSQTNFVLIDFNRPADELFQALLEKGYIVRSGQALGFPTALRITVGTKEQNEEILTILAEIL</sequence>
<dbReference type="EC" id="2.6.1.9" evidence="1"/>
<dbReference type="EMBL" id="CP000560">
    <property type="protein sequence ID" value="ABS74440.1"/>
    <property type="molecule type" value="Genomic_DNA"/>
</dbReference>
<dbReference type="RefSeq" id="WP_007409465.1">
    <property type="nucleotide sequence ID" value="NC_009725.2"/>
</dbReference>
<dbReference type="SMR" id="A7Z614"/>
<dbReference type="GeneID" id="93081213"/>
<dbReference type="KEGG" id="bay:RBAM_020780"/>
<dbReference type="HOGENOM" id="CLU_017584_3_3_9"/>
<dbReference type="UniPathway" id="UPA00031">
    <property type="reaction ID" value="UER00012"/>
</dbReference>
<dbReference type="Proteomes" id="UP000001120">
    <property type="component" value="Chromosome"/>
</dbReference>
<dbReference type="GO" id="GO:0004400">
    <property type="term" value="F:histidinol-phosphate transaminase activity"/>
    <property type="evidence" value="ECO:0007669"/>
    <property type="project" value="UniProtKB-UniRule"/>
</dbReference>
<dbReference type="GO" id="GO:0030170">
    <property type="term" value="F:pyridoxal phosphate binding"/>
    <property type="evidence" value="ECO:0007669"/>
    <property type="project" value="InterPro"/>
</dbReference>
<dbReference type="GO" id="GO:0000105">
    <property type="term" value="P:L-histidine biosynthetic process"/>
    <property type="evidence" value="ECO:0007669"/>
    <property type="project" value="UniProtKB-UniRule"/>
</dbReference>
<dbReference type="CDD" id="cd00609">
    <property type="entry name" value="AAT_like"/>
    <property type="match status" value="1"/>
</dbReference>
<dbReference type="Gene3D" id="3.90.1150.10">
    <property type="entry name" value="Aspartate Aminotransferase, domain 1"/>
    <property type="match status" value="1"/>
</dbReference>
<dbReference type="Gene3D" id="3.40.640.10">
    <property type="entry name" value="Type I PLP-dependent aspartate aminotransferase-like (Major domain)"/>
    <property type="match status" value="1"/>
</dbReference>
<dbReference type="HAMAP" id="MF_01023">
    <property type="entry name" value="HisC_aminotrans_2"/>
    <property type="match status" value="1"/>
</dbReference>
<dbReference type="InterPro" id="IPR001917">
    <property type="entry name" value="Aminotrans_II_pyridoxalP_BS"/>
</dbReference>
<dbReference type="InterPro" id="IPR004839">
    <property type="entry name" value="Aminotransferase_I/II_large"/>
</dbReference>
<dbReference type="InterPro" id="IPR005861">
    <property type="entry name" value="HisP_aminotrans"/>
</dbReference>
<dbReference type="InterPro" id="IPR050106">
    <property type="entry name" value="HistidinolP_aminotransfase"/>
</dbReference>
<dbReference type="InterPro" id="IPR015424">
    <property type="entry name" value="PyrdxlP-dep_Trfase"/>
</dbReference>
<dbReference type="InterPro" id="IPR015421">
    <property type="entry name" value="PyrdxlP-dep_Trfase_major"/>
</dbReference>
<dbReference type="InterPro" id="IPR015422">
    <property type="entry name" value="PyrdxlP-dep_Trfase_small"/>
</dbReference>
<dbReference type="NCBIfam" id="TIGR01141">
    <property type="entry name" value="hisC"/>
    <property type="match status" value="1"/>
</dbReference>
<dbReference type="PANTHER" id="PTHR43643:SF3">
    <property type="entry name" value="HISTIDINOL-PHOSPHATE AMINOTRANSFERASE"/>
    <property type="match status" value="1"/>
</dbReference>
<dbReference type="PANTHER" id="PTHR43643">
    <property type="entry name" value="HISTIDINOL-PHOSPHATE AMINOTRANSFERASE 2"/>
    <property type="match status" value="1"/>
</dbReference>
<dbReference type="Pfam" id="PF00155">
    <property type="entry name" value="Aminotran_1_2"/>
    <property type="match status" value="1"/>
</dbReference>
<dbReference type="SUPFAM" id="SSF53383">
    <property type="entry name" value="PLP-dependent transferases"/>
    <property type="match status" value="1"/>
</dbReference>
<dbReference type="PROSITE" id="PS00599">
    <property type="entry name" value="AA_TRANSFER_CLASS_2"/>
    <property type="match status" value="1"/>
</dbReference>
<organism>
    <name type="scientific">Bacillus velezensis (strain DSM 23117 / BGSC 10A6 / LMG 26770 / FZB42)</name>
    <name type="common">Bacillus amyloliquefaciens subsp. plantarum</name>
    <dbReference type="NCBI Taxonomy" id="326423"/>
    <lineage>
        <taxon>Bacteria</taxon>
        <taxon>Bacillati</taxon>
        <taxon>Bacillota</taxon>
        <taxon>Bacilli</taxon>
        <taxon>Bacillales</taxon>
        <taxon>Bacillaceae</taxon>
        <taxon>Bacillus</taxon>
        <taxon>Bacillus amyloliquefaciens group</taxon>
    </lineage>
</organism>
<accession>A7Z614</accession>
<gene>
    <name evidence="1" type="primary">hisC</name>
    <name type="ordered locus">RBAM_020780</name>
</gene>
<keyword id="KW-0028">Amino-acid biosynthesis</keyword>
<keyword id="KW-0032">Aminotransferase</keyword>
<keyword id="KW-0368">Histidine biosynthesis</keyword>
<keyword id="KW-0663">Pyridoxal phosphate</keyword>
<keyword id="KW-0808">Transferase</keyword>
<comment type="catalytic activity">
    <reaction evidence="1">
        <text>L-histidinol phosphate + 2-oxoglutarate = 3-(imidazol-4-yl)-2-oxopropyl phosphate + L-glutamate</text>
        <dbReference type="Rhea" id="RHEA:23744"/>
        <dbReference type="ChEBI" id="CHEBI:16810"/>
        <dbReference type="ChEBI" id="CHEBI:29985"/>
        <dbReference type="ChEBI" id="CHEBI:57766"/>
        <dbReference type="ChEBI" id="CHEBI:57980"/>
        <dbReference type="EC" id="2.6.1.9"/>
    </reaction>
</comment>
<comment type="cofactor">
    <cofactor evidence="1">
        <name>pyridoxal 5'-phosphate</name>
        <dbReference type="ChEBI" id="CHEBI:597326"/>
    </cofactor>
</comment>
<comment type="pathway">
    <text evidence="1">Amino-acid biosynthesis; L-histidine biosynthesis; L-histidine from 5-phospho-alpha-D-ribose 1-diphosphate: step 7/9.</text>
</comment>
<comment type="subunit">
    <text evidence="1">Homodimer.</text>
</comment>
<comment type="similarity">
    <text evidence="1">Belongs to the class-II pyridoxal-phosphate-dependent aminotransferase family. Histidinol-phosphate aminotransferase subfamily.</text>
</comment>
<reference key="1">
    <citation type="journal article" date="2007" name="Nat. Biotechnol.">
        <title>Comparative analysis of the complete genome sequence of the plant growth-promoting bacterium Bacillus amyloliquefaciens FZB42.</title>
        <authorList>
            <person name="Chen X.H."/>
            <person name="Koumoutsi A."/>
            <person name="Scholz R."/>
            <person name="Eisenreich A."/>
            <person name="Schneider K."/>
            <person name="Heinemeyer I."/>
            <person name="Morgenstern B."/>
            <person name="Voss B."/>
            <person name="Hess W.R."/>
            <person name="Reva O."/>
            <person name="Junge H."/>
            <person name="Voigt B."/>
            <person name="Jungblut P.R."/>
            <person name="Vater J."/>
            <person name="Suessmuth R."/>
            <person name="Liesegang H."/>
            <person name="Strittmatter A."/>
            <person name="Gottschalk G."/>
            <person name="Borriss R."/>
        </authorList>
    </citation>
    <scope>NUCLEOTIDE SEQUENCE [LARGE SCALE GENOMIC DNA]</scope>
    <source>
        <strain>DSM 23117 / BGSC 10A6 / LMG 26770 / FZB42</strain>
    </source>
</reference>
<feature type="chain" id="PRO_1000063460" description="Histidinol-phosphate aminotransferase">
    <location>
        <begin position="1"/>
        <end position="360"/>
    </location>
</feature>
<feature type="modified residue" description="N6-(pyridoxal phosphate)lysine" evidence="1">
    <location>
        <position position="223"/>
    </location>
</feature>
<evidence type="ECO:0000255" key="1">
    <source>
        <dbReference type="HAMAP-Rule" id="MF_01023"/>
    </source>
</evidence>